<protein>
    <recommendedName>
        <fullName evidence="1">Proline--tRNA ligase</fullName>
        <ecNumber evidence="1">6.1.1.15</ecNumber>
    </recommendedName>
    <alternativeName>
        <fullName evidence="1">Prolyl-tRNA synthetase</fullName>
        <shortName evidence="1">ProRS</shortName>
    </alternativeName>
</protein>
<keyword id="KW-0030">Aminoacyl-tRNA synthetase</keyword>
<keyword id="KW-0067">ATP-binding</keyword>
<keyword id="KW-0963">Cytoplasm</keyword>
<keyword id="KW-0436">Ligase</keyword>
<keyword id="KW-0547">Nucleotide-binding</keyword>
<keyword id="KW-0648">Protein biosynthesis</keyword>
<evidence type="ECO:0000255" key="1">
    <source>
        <dbReference type="HAMAP-Rule" id="MF_01569"/>
    </source>
</evidence>
<accession>B8DG08</accession>
<name>SYP_LISMH</name>
<proteinExistence type="inferred from homology"/>
<dbReference type="EC" id="6.1.1.15" evidence="1"/>
<dbReference type="EMBL" id="CP001175">
    <property type="protein sequence ID" value="ACK39598.1"/>
    <property type="molecule type" value="Genomic_DNA"/>
</dbReference>
<dbReference type="RefSeq" id="WP_012581385.1">
    <property type="nucleotide sequence ID" value="NC_011660.1"/>
</dbReference>
<dbReference type="SMR" id="B8DG08"/>
<dbReference type="KEGG" id="lmh:LMHCC_1251"/>
<dbReference type="HOGENOM" id="CLU_016739_0_0_9"/>
<dbReference type="GO" id="GO:0005829">
    <property type="term" value="C:cytosol"/>
    <property type="evidence" value="ECO:0007669"/>
    <property type="project" value="TreeGrafter"/>
</dbReference>
<dbReference type="GO" id="GO:0002161">
    <property type="term" value="F:aminoacyl-tRNA deacylase activity"/>
    <property type="evidence" value="ECO:0007669"/>
    <property type="project" value="InterPro"/>
</dbReference>
<dbReference type="GO" id="GO:0005524">
    <property type="term" value="F:ATP binding"/>
    <property type="evidence" value="ECO:0007669"/>
    <property type="project" value="UniProtKB-UniRule"/>
</dbReference>
<dbReference type="GO" id="GO:0140096">
    <property type="term" value="F:catalytic activity, acting on a protein"/>
    <property type="evidence" value="ECO:0007669"/>
    <property type="project" value="UniProtKB-ARBA"/>
</dbReference>
<dbReference type="GO" id="GO:0004827">
    <property type="term" value="F:proline-tRNA ligase activity"/>
    <property type="evidence" value="ECO:0007669"/>
    <property type="project" value="UniProtKB-UniRule"/>
</dbReference>
<dbReference type="GO" id="GO:0016740">
    <property type="term" value="F:transferase activity"/>
    <property type="evidence" value="ECO:0007669"/>
    <property type="project" value="UniProtKB-ARBA"/>
</dbReference>
<dbReference type="GO" id="GO:0006433">
    <property type="term" value="P:prolyl-tRNA aminoacylation"/>
    <property type="evidence" value="ECO:0007669"/>
    <property type="project" value="UniProtKB-UniRule"/>
</dbReference>
<dbReference type="CDD" id="cd04334">
    <property type="entry name" value="ProRS-INS"/>
    <property type="match status" value="1"/>
</dbReference>
<dbReference type="CDD" id="cd00861">
    <property type="entry name" value="ProRS_anticodon_short"/>
    <property type="match status" value="1"/>
</dbReference>
<dbReference type="CDD" id="cd00779">
    <property type="entry name" value="ProRS_core_prok"/>
    <property type="match status" value="1"/>
</dbReference>
<dbReference type="FunFam" id="3.30.930.10:FF:000043">
    <property type="entry name" value="Proline--tRNA ligase"/>
    <property type="match status" value="1"/>
</dbReference>
<dbReference type="FunFam" id="3.30.930.10:FF:000088">
    <property type="entry name" value="Proline--tRNA ligase"/>
    <property type="match status" value="1"/>
</dbReference>
<dbReference type="FunFam" id="3.40.50.800:FF:000011">
    <property type="entry name" value="Proline--tRNA ligase"/>
    <property type="match status" value="1"/>
</dbReference>
<dbReference type="Gene3D" id="3.40.50.800">
    <property type="entry name" value="Anticodon-binding domain"/>
    <property type="match status" value="1"/>
</dbReference>
<dbReference type="Gene3D" id="3.30.930.10">
    <property type="entry name" value="Bira Bifunctional Protein, Domain 2"/>
    <property type="match status" value="2"/>
</dbReference>
<dbReference type="HAMAP" id="MF_01569">
    <property type="entry name" value="Pro_tRNA_synth_type1"/>
    <property type="match status" value="1"/>
</dbReference>
<dbReference type="InterPro" id="IPR002314">
    <property type="entry name" value="aa-tRNA-synt_IIb"/>
</dbReference>
<dbReference type="InterPro" id="IPR006195">
    <property type="entry name" value="aa-tRNA-synth_II"/>
</dbReference>
<dbReference type="InterPro" id="IPR045864">
    <property type="entry name" value="aa-tRNA-synth_II/BPL/LPL"/>
</dbReference>
<dbReference type="InterPro" id="IPR004154">
    <property type="entry name" value="Anticodon-bd"/>
</dbReference>
<dbReference type="InterPro" id="IPR036621">
    <property type="entry name" value="Anticodon-bd_dom_sf"/>
</dbReference>
<dbReference type="InterPro" id="IPR002316">
    <property type="entry name" value="Pro-tRNA-ligase_IIa"/>
</dbReference>
<dbReference type="InterPro" id="IPR004500">
    <property type="entry name" value="Pro-tRNA-synth_IIa_bac-type"/>
</dbReference>
<dbReference type="InterPro" id="IPR023717">
    <property type="entry name" value="Pro-tRNA-Synthase_IIa_type1"/>
</dbReference>
<dbReference type="InterPro" id="IPR050062">
    <property type="entry name" value="Pro-tRNA_synthetase"/>
</dbReference>
<dbReference type="InterPro" id="IPR044140">
    <property type="entry name" value="ProRS_anticodon_short"/>
</dbReference>
<dbReference type="InterPro" id="IPR033730">
    <property type="entry name" value="ProRS_core_prok"/>
</dbReference>
<dbReference type="InterPro" id="IPR036754">
    <property type="entry name" value="YbaK/aa-tRNA-synt-asso_dom_sf"/>
</dbReference>
<dbReference type="InterPro" id="IPR007214">
    <property type="entry name" value="YbaK/aa-tRNA-synth-assoc-dom"/>
</dbReference>
<dbReference type="NCBIfam" id="NF006625">
    <property type="entry name" value="PRK09194.1"/>
    <property type="match status" value="1"/>
</dbReference>
<dbReference type="NCBIfam" id="TIGR00409">
    <property type="entry name" value="proS_fam_II"/>
    <property type="match status" value="1"/>
</dbReference>
<dbReference type="PANTHER" id="PTHR42753">
    <property type="entry name" value="MITOCHONDRIAL RIBOSOME PROTEIN L39/PROLYL-TRNA LIGASE FAMILY MEMBER"/>
    <property type="match status" value="1"/>
</dbReference>
<dbReference type="PANTHER" id="PTHR42753:SF2">
    <property type="entry name" value="PROLINE--TRNA LIGASE"/>
    <property type="match status" value="1"/>
</dbReference>
<dbReference type="Pfam" id="PF03129">
    <property type="entry name" value="HGTP_anticodon"/>
    <property type="match status" value="1"/>
</dbReference>
<dbReference type="Pfam" id="PF00587">
    <property type="entry name" value="tRNA-synt_2b"/>
    <property type="match status" value="1"/>
</dbReference>
<dbReference type="Pfam" id="PF04073">
    <property type="entry name" value="tRNA_edit"/>
    <property type="match status" value="1"/>
</dbReference>
<dbReference type="PIRSF" id="PIRSF001535">
    <property type="entry name" value="ProRS_1"/>
    <property type="match status" value="1"/>
</dbReference>
<dbReference type="PRINTS" id="PR01046">
    <property type="entry name" value="TRNASYNTHPRO"/>
</dbReference>
<dbReference type="SUPFAM" id="SSF52954">
    <property type="entry name" value="Class II aaRS ABD-related"/>
    <property type="match status" value="1"/>
</dbReference>
<dbReference type="SUPFAM" id="SSF55681">
    <property type="entry name" value="Class II aaRS and biotin synthetases"/>
    <property type="match status" value="1"/>
</dbReference>
<dbReference type="SUPFAM" id="SSF55826">
    <property type="entry name" value="YbaK/ProRS associated domain"/>
    <property type="match status" value="1"/>
</dbReference>
<dbReference type="PROSITE" id="PS50862">
    <property type="entry name" value="AA_TRNA_LIGASE_II"/>
    <property type="match status" value="1"/>
</dbReference>
<feature type="chain" id="PRO_1000185505" description="Proline--tRNA ligase">
    <location>
        <begin position="1"/>
        <end position="568"/>
    </location>
</feature>
<sequence>MRQTMTFIPTLKEVPADAEVKSHQLLLRAGFIRQTASGIYSYLPLATLMLRKIETIIREELEAIGAAELLMPALQPAELWQESGRWNDYGPELMRLKDRASRDFALGPTHEEVITALLRDEVKSYKRLPLTLYQIQTKFRDEKRPRFGLLRGREFIMKDAYSFHATSESLDEVYNLMHQAYSNIFTRCGLEFRSVIADSGSIGGNESKEFMALSDIGEDTIAYSDASDYAANTEMAPVLYMEKKSHELEKELEKVATPDQKSIADIVEFLEVPIEKTMKSMLYQVDEEVIMVLVRGDHEVNDIKIKNALDATNVELVDPAVAVELLGANFGSLGPINVPENTRVFADNAVKDIVNAVVGANEDGFHYINVNADRDFTVTSYFDLRMIQVGDLSPDGQGVIKFAEGIEVGHIFKLGTKYSQAMNATILDENGRAQPIIMGCYGIGVSRILSAIAEQSNDENGFVWDKQISPFDLHLIPVNMKSEEQVAFAETLYTSLQGAGFSVLIDDRAERAGVKFADADLIGLPIRITVGKKAAEGVVEVKIRKTGEMIEVRQDELLNTLPILFGDK</sequence>
<gene>
    <name evidence="1" type="primary">proS</name>
    <name type="ordered locus">LMHCC_1251</name>
</gene>
<reference key="1">
    <citation type="journal article" date="2011" name="J. Bacteriol.">
        <title>Genome sequence of lineage III Listeria monocytogenes strain HCC23.</title>
        <authorList>
            <person name="Steele C.L."/>
            <person name="Donaldson J.R."/>
            <person name="Paul D."/>
            <person name="Banes M.M."/>
            <person name="Arick T."/>
            <person name="Bridges S.M."/>
            <person name="Lawrence M.L."/>
        </authorList>
    </citation>
    <scope>NUCLEOTIDE SEQUENCE [LARGE SCALE GENOMIC DNA]</scope>
    <source>
        <strain>HCC23</strain>
    </source>
</reference>
<organism>
    <name type="scientific">Listeria monocytogenes serotype 4a (strain HCC23)</name>
    <dbReference type="NCBI Taxonomy" id="552536"/>
    <lineage>
        <taxon>Bacteria</taxon>
        <taxon>Bacillati</taxon>
        <taxon>Bacillota</taxon>
        <taxon>Bacilli</taxon>
        <taxon>Bacillales</taxon>
        <taxon>Listeriaceae</taxon>
        <taxon>Listeria</taxon>
    </lineage>
</organism>
<comment type="function">
    <text evidence="1">Catalyzes the attachment of proline to tRNA(Pro) in a two-step reaction: proline is first activated by ATP to form Pro-AMP and then transferred to the acceptor end of tRNA(Pro). As ProRS can inadvertently accommodate and process non-cognate amino acids such as alanine and cysteine, to avoid such errors it has two additional distinct editing activities against alanine. One activity is designated as 'pretransfer' editing and involves the tRNA(Pro)-independent hydrolysis of activated Ala-AMP. The other activity is designated 'posttransfer' editing and involves deacylation of mischarged Ala-tRNA(Pro). The misacylated Cys-tRNA(Pro) is not edited by ProRS.</text>
</comment>
<comment type="catalytic activity">
    <reaction evidence="1">
        <text>tRNA(Pro) + L-proline + ATP = L-prolyl-tRNA(Pro) + AMP + diphosphate</text>
        <dbReference type="Rhea" id="RHEA:14305"/>
        <dbReference type="Rhea" id="RHEA-COMP:9700"/>
        <dbReference type="Rhea" id="RHEA-COMP:9702"/>
        <dbReference type="ChEBI" id="CHEBI:30616"/>
        <dbReference type="ChEBI" id="CHEBI:33019"/>
        <dbReference type="ChEBI" id="CHEBI:60039"/>
        <dbReference type="ChEBI" id="CHEBI:78442"/>
        <dbReference type="ChEBI" id="CHEBI:78532"/>
        <dbReference type="ChEBI" id="CHEBI:456215"/>
        <dbReference type="EC" id="6.1.1.15"/>
    </reaction>
</comment>
<comment type="subunit">
    <text evidence="1">Homodimer.</text>
</comment>
<comment type="subcellular location">
    <subcellularLocation>
        <location evidence="1">Cytoplasm</location>
    </subcellularLocation>
</comment>
<comment type="domain">
    <text evidence="1">Consists of three domains: the N-terminal catalytic domain, the editing domain and the C-terminal anticodon-binding domain.</text>
</comment>
<comment type="similarity">
    <text evidence="1">Belongs to the class-II aminoacyl-tRNA synthetase family. ProS type 1 subfamily.</text>
</comment>